<keyword id="KW-0413">Isomerase</keyword>
<keyword id="KW-0460">Magnesium</keyword>
<keyword id="KW-0479">Metal-binding</keyword>
<keyword id="KW-0597">Phosphoprotein</keyword>
<keyword id="KW-1185">Reference proteome</keyword>
<gene>
    <name evidence="1" type="primary">glmM</name>
    <name type="ordered locus">GK0154</name>
</gene>
<organism>
    <name type="scientific">Geobacillus kaustophilus (strain HTA426)</name>
    <dbReference type="NCBI Taxonomy" id="235909"/>
    <lineage>
        <taxon>Bacteria</taxon>
        <taxon>Bacillati</taxon>
        <taxon>Bacillota</taxon>
        <taxon>Bacilli</taxon>
        <taxon>Bacillales</taxon>
        <taxon>Anoxybacillaceae</taxon>
        <taxon>Geobacillus</taxon>
        <taxon>Geobacillus thermoleovorans group</taxon>
    </lineage>
</organism>
<dbReference type="EC" id="5.4.2.10" evidence="1"/>
<dbReference type="EMBL" id="BA000043">
    <property type="protein sequence ID" value="BAD74439.1"/>
    <property type="molecule type" value="Genomic_DNA"/>
</dbReference>
<dbReference type="RefSeq" id="WP_011229666.1">
    <property type="nucleotide sequence ID" value="NC_006510.1"/>
</dbReference>
<dbReference type="SMR" id="Q5L3P1"/>
<dbReference type="STRING" id="235909.GK0154"/>
<dbReference type="KEGG" id="gka:GK0154"/>
<dbReference type="eggNOG" id="COG1109">
    <property type="taxonomic scope" value="Bacteria"/>
</dbReference>
<dbReference type="HOGENOM" id="CLU_016950_7_0_9"/>
<dbReference type="Proteomes" id="UP000001172">
    <property type="component" value="Chromosome"/>
</dbReference>
<dbReference type="GO" id="GO:0005829">
    <property type="term" value="C:cytosol"/>
    <property type="evidence" value="ECO:0007669"/>
    <property type="project" value="TreeGrafter"/>
</dbReference>
<dbReference type="GO" id="GO:0000287">
    <property type="term" value="F:magnesium ion binding"/>
    <property type="evidence" value="ECO:0007669"/>
    <property type="project" value="UniProtKB-UniRule"/>
</dbReference>
<dbReference type="GO" id="GO:0008966">
    <property type="term" value="F:phosphoglucosamine mutase activity"/>
    <property type="evidence" value="ECO:0007669"/>
    <property type="project" value="UniProtKB-UniRule"/>
</dbReference>
<dbReference type="GO" id="GO:0004615">
    <property type="term" value="F:phosphomannomutase activity"/>
    <property type="evidence" value="ECO:0007669"/>
    <property type="project" value="TreeGrafter"/>
</dbReference>
<dbReference type="GO" id="GO:0005975">
    <property type="term" value="P:carbohydrate metabolic process"/>
    <property type="evidence" value="ECO:0007669"/>
    <property type="project" value="InterPro"/>
</dbReference>
<dbReference type="GO" id="GO:0009252">
    <property type="term" value="P:peptidoglycan biosynthetic process"/>
    <property type="evidence" value="ECO:0007669"/>
    <property type="project" value="TreeGrafter"/>
</dbReference>
<dbReference type="GO" id="GO:0006048">
    <property type="term" value="P:UDP-N-acetylglucosamine biosynthetic process"/>
    <property type="evidence" value="ECO:0007669"/>
    <property type="project" value="TreeGrafter"/>
</dbReference>
<dbReference type="CDD" id="cd05802">
    <property type="entry name" value="GlmM"/>
    <property type="match status" value="1"/>
</dbReference>
<dbReference type="FunFam" id="3.30.310.50:FF:000001">
    <property type="entry name" value="Phosphoglucosamine mutase"/>
    <property type="match status" value="1"/>
</dbReference>
<dbReference type="FunFam" id="3.40.120.10:FF:000001">
    <property type="entry name" value="Phosphoglucosamine mutase"/>
    <property type="match status" value="1"/>
</dbReference>
<dbReference type="FunFam" id="3.40.120.10:FF:000002">
    <property type="entry name" value="Phosphoglucosamine mutase"/>
    <property type="match status" value="1"/>
</dbReference>
<dbReference type="Gene3D" id="3.40.120.10">
    <property type="entry name" value="Alpha-D-Glucose-1,6-Bisphosphate, subunit A, domain 3"/>
    <property type="match status" value="3"/>
</dbReference>
<dbReference type="Gene3D" id="3.30.310.50">
    <property type="entry name" value="Alpha-D-phosphohexomutase, C-terminal domain"/>
    <property type="match status" value="1"/>
</dbReference>
<dbReference type="HAMAP" id="MF_01554_B">
    <property type="entry name" value="GlmM_B"/>
    <property type="match status" value="1"/>
</dbReference>
<dbReference type="InterPro" id="IPR005844">
    <property type="entry name" value="A-D-PHexomutase_a/b/a-I"/>
</dbReference>
<dbReference type="InterPro" id="IPR016055">
    <property type="entry name" value="A-D-PHexomutase_a/b/a-I/II/III"/>
</dbReference>
<dbReference type="InterPro" id="IPR005845">
    <property type="entry name" value="A-D-PHexomutase_a/b/a-II"/>
</dbReference>
<dbReference type="InterPro" id="IPR005846">
    <property type="entry name" value="A-D-PHexomutase_a/b/a-III"/>
</dbReference>
<dbReference type="InterPro" id="IPR005843">
    <property type="entry name" value="A-D-PHexomutase_C"/>
</dbReference>
<dbReference type="InterPro" id="IPR036900">
    <property type="entry name" value="A-D-PHexomutase_C_sf"/>
</dbReference>
<dbReference type="InterPro" id="IPR016066">
    <property type="entry name" value="A-D-PHexomutase_CS"/>
</dbReference>
<dbReference type="InterPro" id="IPR005841">
    <property type="entry name" value="Alpha-D-phosphohexomutase_SF"/>
</dbReference>
<dbReference type="InterPro" id="IPR006352">
    <property type="entry name" value="GlmM_bact"/>
</dbReference>
<dbReference type="InterPro" id="IPR050060">
    <property type="entry name" value="Phosphoglucosamine_mutase"/>
</dbReference>
<dbReference type="NCBIfam" id="TIGR01455">
    <property type="entry name" value="glmM"/>
    <property type="match status" value="1"/>
</dbReference>
<dbReference type="NCBIfam" id="NF008139">
    <property type="entry name" value="PRK10887.1"/>
    <property type="match status" value="1"/>
</dbReference>
<dbReference type="PANTHER" id="PTHR42946:SF1">
    <property type="entry name" value="PHOSPHOGLUCOMUTASE (ALPHA-D-GLUCOSE-1,6-BISPHOSPHATE-DEPENDENT)"/>
    <property type="match status" value="1"/>
</dbReference>
<dbReference type="PANTHER" id="PTHR42946">
    <property type="entry name" value="PHOSPHOHEXOSE MUTASE"/>
    <property type="match status" value="1"/>
</dbReference>
<dbReference type="Pfam" id="PF02878">
    <property type="entry name" value="PGM_PMM_I"/>
    <property type="match status" value="1"/>
</dbReference>
<dbReference type="Pfam" id="PF02879">
    <property type="entry name" value="PGM_PMM_II"/>
    <property type="match status" value="1"/>
</dbReference>
<dbReference type="Pfam" id="PF02880">
    <property type="entry name" value="PGM_PMM_III"/>
    <property type="match status" value="1"/>
</dbReference>
<dbReference type="Pfam" id="PF00408">
    <property type="entry name" value="PGM_PMM_IV"/>
    <property type="match status" value="1"/>
</dbReference>
<dbReference type="PRINTS" id="PR00509">
    <property type="entry name" value="PGMPMM"/>
</dbReference>
<dbReference type="SUPFAM" id="SSF55957">
    <property type="entry name" value="Phosphoglucomutase, C-terminal domain"/>
    <property type="match status" value="1"/>
</dbReference>
<dbReference type="SUPFAM" id="SSF53738">
    <property type="entry name" value="Phosphoglucomutase, first 3 domains"/>
    <property type="match status" value="3"/>
</dbReference>
<dbReference type="PROSITE" id="PS00710">
    <property type="entry name" value="PGM_PMM"/>
    <property type="match status" value="1"/>
</dbReference>
<accession>Q5L3P1</accession>
<comment type="function">
    <text evidence="1">Catalyzes the conversion of glucosamine-6-phosphate to glucosamine-1-phosphate.</text>
</comment>
<comment type="catalytic activity">
    <reaction evidence="1">
        <text>alpha-D-glucosamine 1-phosphate = D-glucosamine 6-phosphate</text>
        <dbReference type="Rhea" id="RHEA:23424"/>
        <dbReference type="ChEBI" id="CHEBI:58516"/>
        <dbReference type="ChEBI" id="CHEBI:58725"/>
        <dbReference type="EC" id="5.4.2.10"/>
    </reaction>
</comment>
<comment type="cofactor">
    <cofactor evidence="1">
        <name>Mg(2+)</name>
        <dbReference type="ChEBI" id="CHEBI:18420"/>
    </cofactor>
    <text evidence="1">Binds 1 Mg(2+) ion per subunit.</text>
</comment>
<comment type="PTM">
    <text evidence="1">Activated by phosphorylation.</text>
</comment>
<comment type="similarity">
    <text evidence="1">Belongs to the phosphohexose mutase family.</text>
</comment>
<reference key="1">
    <citation type="journal article" date="2004" name="Nucleic Acids Res.">
        <title>Thermoadaptation trait revealed by the genome sequence of thermophilic Geobacillus kaustophilus.</title>
        <authorList>
            <person name="Takami H."/>
            <person name="Takaki Y."/>
            <person name="Chee G.-J."/>
            <person name="Nishi S."/>
            <person name="Shimamura S."/>
            <person name="Suzuki H."/>
            <person name="Matsui S."/>
            <person name="Uchiyama I."/>
        </authorList>
    </citation>
    <scope>NUCLEOTIDE SEQUENCE [LARGE SCALE GENOMIC DNA]</scope>
    <source>
        <strain>HTA426</strain>
    </source>
</reference>
<sequence>MGKYFGTDGVRGVANRELTPELAFQIGRCGGYVLTKSAERPKVLIGRDTRISGHMLEGALVAGLLSIGAEVMRLGVISTPGVAYLTKALGAQAGIMISASHNPVQDNGIKFFGPDGFKLSDEQEAEIEALIDSAEDMLPRPIGAGLGQVNDYFEGGQKYLQYLKQTIDEEDFSGMKIALDCAHGATSSLATYLFADLDADVVTMGASPNGLNINEGVGSTHPEALAAFVKEKGADVGLAFDGDGDRLIAVDERGNIVDGDQIMYICAKYLKETGRLKQQTVVSTVMSNLGFYKALEAQGIKSVQTAVGDRYVVEEMKKNGYNLGGEQSGHIIFLDYNTTGDGMLTALQLVNIMKIKGKPLSELAGEMKKYPQLLVNVRVADKEKAMENEQVKKVIQEVEAEMNGNGRVLVRPSGTEPLVRIMAEAQTEEACRAYVERIADVVRREMGVE</sequence>
<proteinExistence type="inferred from homology"/>
<protein>
    <recommendedName>
        <fullName evidence="1">Phosphoglucosamine mutase</fullName>
        <ecNumber evidence="1">5.4.2.10</ecNumber>
    </recommendedName>
</protein>
<feature type="chain" id="PRO_0000147892" description="Phosphoglucosamine mutase">
    <location>
        <begin position="1"/>
        <end position="449"/>
    </location>
</feature>
<feature type="active site" description="Phosphoserine intermediate" evidence="1">
    <location>
        <position position="100"/>
    </location>
</feature>
<feature type="binding site" description="via phosphate group" evidence="1">
    <location>
        <position position="100"/>
    </location>
    <ligand>
        <name>Mg(2+)</name>
        <dbReference type="ChEBI" id="CHEBI:18420"/>
    </ligand>
</feature>
<feature type="binding site" evidence="1">
    <location>
        <position position="241"/>
    </location>
    <ligand>
        <name>Mg(2+)</name>
        <dbReference type="ChEBI" id="CHEBI:18420"/>
    </ligand>
</feature>
<feature type="binding site" evidence="1">
    <location>
        <position position="243"/>
    </location>
    <ligand>
        <name>Mg(2+)</name>
        <dbReference type="ChEBI" id="CHEBI:18420"/>
    </ligand>
</feature>
<feature type="binding site" evidence="1">
    <location>
        <position position="245"/>
    </location>
    <ligand>
        <name>Mg(2+)</name>
        <dbReference type="ChEBI" id="CHEBI:18420"/>
    </ligand>
</feature>
<feature type="modified residue" description="Phosphoserine" evidence="1">
    <location>
        <position position="100"/>
    </location>
</feature>
<evidence type="ECO:0000255" key="1">
    <source>
        <dbReference type="HAMAP-Rule" id="MF_01554"/>
    </source>
</evidence>
<name>GLMM_GEOKA</name>